<proteinExistence type="inferred from homology"/>
<gene>
    <name type="primary">yrhE</name>
    <name type="ordered locus">BSU27220</name>
</gene>
<organism>
    <name type="scientific">Bacillus subtilis (strain 168)</name>
    <dbReference type="NCBI Taxonomy" id="224308"/>
    <lineage>
        <taxon>Bacteria</taxon>
        <taxon>Bacillati</taxon>
        <taxon>Bacillota</taxon>
        <taxon>Bacilli</taxon>
        <taxon>Bacillales</taxon>
        <taxon>Bacillaceae</taxon>
        <taxon>Bacillus</taxon>
    </lineage>
</organism>
<evidence type="ECO:0000250" key="1"/>
<evidence type="ECO:0000255" key="2">
    <source>
        <dbReference type="PROSITE-ProRule" id="PRU00465"/>
    </source>
</evidence>
<evidence type="ECO:0000255" key="3">
    <source>
        <dbReference type="PROSITE-ProRule" id="PRU00711"/>
    </source>
</evidence>
<evidence type="ECO:0000255" key="4">
    <source>
        <dbReference type="PROSITE-ProRule" id="PRU01004"/>
    </source>
</evidence>
<evidence type="ECO:0000255" key="5">
    <source>
        <dbReference type="PROSITE-ProRule" id="PRU01184"/>
    </source>
</evidence>
<evidence type="ECO:0000256" key="6">
    <source>
        <dbReference type="SAM" id="MobiDB-lite"/>
    </source>
</evidence>
<evidence type="ECO:0000305" key="7"/>
<keyword id="KW-0001">2Fe-2S</keyword>
<keyword id="KW-0004">4Fe-4S</keyword>
<keyword id="KW-0408">Iron</keyword>
<keyword id="KW-0411">Iron-sulfur</keyword>
<keyword id="KW-0479">Metal-binding</keyword>
<keyword id="KW-0500">Molybdenum</keyword>
<keyword id="KW-0520">NAD</keyword>
<keyword id="KW-0560">Oxidoreductase</keyword>
<keyword id="KW-1185">Reference proteome</keyword>
<keyword id="KW-0677">Repeat</keyword>
<dbReference type="EC" id="1.17.1.9"/>
<dbReference type="EMBL" id="AL009126">
    <property type="protein sequence ID" value="CAB14664.1"/>
    <property type="molecule type" value="Genomic_DNA"/>
</dbReference>
<dbReference type="RefSeq" id="NP_390600.1">
    <property type="nucleotide sequence ID" value="NC_000964.3"/>
</dbReference>
<dbReference type="SMR" id="Q795Y4"/>
<dbReference type="FunCoup" id="Q795Y4">
    <property type="interactions" value="632"/>
</dbReference>
<dbReference type="STRING" id="224308.BSU27220"/>
<dbReference type="PaxDb" id="224308-BSU27220"/>
<dbReference type="EnsemblBacteria" id="CAB14664">
    <property type="protein sequence ID" value="CAB14664"/>
    <property type="gene ID" value="BSU_27220"/>
</dbReference>
<dbReference type="GeneID" id="937569"/>
<dbReference type="KEGG" id="bsu:BSU27220"/>
<dbReference type="PATRIC" id="fig|224308.43.peg.2839"/>
<dbReference type="eggNOG" id="COG3383">
    <property type="taxonomic scope" value="Bacteria"/>
</dbReference>
<dbReference type="InParanoid" id="Q795Y4"/>
<dbReference type="OrthoDB" id="9805142at2"/>
<dbReference type="PhylomeDB" id="Q795Y4"/>
<dbReference type="BioCyc" id="BSUB:BSU27220-MONOMER"/>
<dbReference type="Proteomes" id="UP000001570">
    <property type="component" value="Chromosome"/>
</dbReference>
<dbReference type="GO" id="GO:0016020">
    <property type="term" value="C:membrane"/>
    <property type="evidence" value="ECO:0000318"/>
    <property type="project" value="GO_Central"/>
</dbReference>
<dbReference type="GO" id="GO:0051537">
    <property type="term" value="F:2 iron, 2 sulfur cluster binding"/>
    <property type="evidence" value="ECO:0007669"/>
    <property type="project" value="UniProtKB-KW"/>
</dbReference>
<dbReference type="GO" id="GO:0051539">
    <property type="term" value="F:4 iron, 4 sulfur cluster binding"/>
    <property type="evidence" value="ECO:0007669"/>
    <property type="project" value="UniProtKB-KW"/>
</dbReference>
<dbReference type="GO" id="GO:0008863">
    <property type="term" value="F:formate dehydrogenase (NAD+) activity"/>
    <property type="evidence" value="ECO:0007669"/>
    <property type="project" value="UniProtKB-EC"/>
</dbReference>
<dbReference type="GO" id="GO:0046872">
    <property type="term" value="F:metal ion binding"/>
    <property type="evidence" value="ECO:0007669"/>
    <property type="project" value="UniProtKB-KW"/>
</dbReference>
<dbReference type="GO" id="GO:0043546">
    <property type="term" value="F:molybdopterin cofactor binding"/>
    <property type="evidence" value="ECO:0007669"/>
    <property type="project" value="InterPro"/>
</dbReference>
<dbReference type="GO" id="GO:0015942">
    <property type="term" value="P:formate metabolic process"/>
    <property type="evidence" value="ECO:0007669"/>
    <property type="project" value="InterPro"/>
</dbReference>
<dbReference type="GO" id="GO:0022904">
    <property type="term" value="P:respiratory electron transport chain"/>
    <property type="evidence" value="ECO:0000318"/>
    <property type="project" value="GO_Central"/>
</dbReference>
<dbReference type="CDD" id="cd00207">
    <property type="entry name" value="fer2"/>
    <property type="match status" value="1"/>
</dbReference>
<dbReference type="CDD" id="cd02792">
    <property type="entry name" value="MopB_CT_Formate-Dh-Na-like"/>
    <property type="match status" value="1"/>
</dbReference>
<dbReference type="CDD" id="cd02753">
    <property type="entry name" value="MopB_Formate-Dh-H"/>
    <property type="match status" value="1"/>
</dbReference>
<dbReference type="FunFam" id="2.20.25.90:FF:000001">
    <property type="entry name" value="Formate dehydrogenase subunit alpha"/>
    <property type="match status" value="1"/>
</dbReference>
<dbReference type="FunFam" id="3.10.20.740:FF:000003">
    <property type="entry name" value="Formate dehydrogenase subunit alpha"/>
    <property type="match status" value="1"/>
</dbReference>
<dbReference type="FunFam" id="3.40.228.10:FF:000002">
    <property type="entry name" value="Formate dehydrogenase subunit alpha"/>
    <property type="match status" value="1"/>
</dbReference>
<dbReference type="FunFam" id="3.30.70.20:FF:000032">
    <property type="entry name" value="Formate dehydrogenase, alpha subunit"/>
    <property type="match status" value="1"/>
</dbReference>
<dbReference type="FunFam" id="2.40.40.20:FF:000005">
    <property type="entry name" value="Periplasmic nitrate reductase"/>
    <property type="match status" value="1"/>
</dbReference>
<dbReference type="Gene3D" id="2.40.40.20">
    <property type="match status" value="1"/>
</dbReference>
<dbReference type="Gene3D" id="3.10.20.740">
    <property type="match status" value="1"/>
</dbReference>
<dbReference type="Gene3D" id="3.30.70.20">
    <property type="match status" value="1"/>
</dbReference>
<dbReference type="Gene3D" id="3.40.50.740">
    <property type="match status" value="1"/>
</dbReference>
<dbReference type="Gene3D" id="2.20.25.90">
    <property type="entry name" value="ADC-like domains"/>
    <property type="match status" value="1"/>
</dbReference>
<dbReference type="Gene3D" id="3.40.228.10">
    <property type="entry name" value="Dimethylsulfoxide Reductase, domain 2"/>
    <property type="match status" value="1"/>
</dbReference>
<dbReference type="InterPro" id="IPR036010">
    <property type="entry name" value="2Fe-2S_ferredoxin-like_sf"/>
</dbReference>
<dbReference type="InterPro" id="IPR001041">
    <property type="entry name" value="2Fe-2S_ferredoxin-type"/>
</dbReference>
<dbReference type="InterPro" id="IPR017896">
    <property type="entry name" value="4Fe4S_Fe-S-bd"/>
</dbReference>
<dbReference type="InterPro" id="IPR017900">
    <property type="entry name" value="4Fe4S_Fe_S_CS"/>
</dbReference>
<dbReference type="InterPro" id="IPR009010">
    <property type="entry name" value="Asp_de-COase-like_dom_sf"/>
</dbReference>
<dbReference type="InterPro" id="IPR041924">
    <property type="entry name" value="Formate_Dh-H_N"/>
</dbReference>
<dbReference type="InterPro" id="IPR006478">
    <property type="entry name" value="Formate_DH_asu"/>
</dbReference>
<dbReference type="InterPro" id="IPR006657">
    <property type="entry name" value="MoPterin_dinucl-bd_dom"/>
</dbReference>
<dbReference type="InterPro" id="IPR006656">
    <property type="entry name" value="Mopterin_OxRdtase"/>
</dbReference>
<dbReference type="InterPro" id="IPR006963">
    <property type="entry name" value="Mopterin_OxRdtase_4Fe-4S_dom"/>
</dbReference>
<dbReference type="InterPro" id="IPR019574">
    <property type="entry name" value="NADH_UbQ_OxRdtase_Gsu_4Fe4S-bd"/>
</dbReference>
<dbReference type="InterPro" id="IPR050123">
    <property type="entry name" value="Prok_molybdopt-oxidoreductase"/>
</dbReference>
<dbReference type="NCBIfam" id="TIGR01591">
    <property type="entry name" value="Fdh-alpha"/>
    <property type="match status" value="1"/>
</dbReference>
<dbReference type="PANTHER" id="PTHR43105:SF14">
    <property type="entry name" value="FORMATE DEHYDROGENASE H"/>
    <property type="match status" value="1"/>
</dbReference>
<dbReference type="PANTHER" id="PTHR43105">
    <property type="entry name" value="RESPIRATORY NITRATE REDUCTASE"/>
    <property type="match status" value="1"/>
</dbReference>
<dbReference type="Pfam" id="PF13510">
    <property type="entry name" value="Fer2_4"/>
    <property type="match status" value="1"/>
</dbReference>
<dbReference type="Pfam" id="PF12838">
    <property type="entry name" value="Fer4_7"/>
    <property type="match status" value="1"/>
</dbReference>
<dbReference type="Pfam" id="PF04879">
    <property type="entry name" value="Molybdop_Fe4S4"/>
    <property type="match status" value="1"/>
</dbReference>
<dbReference type="Pfam" id="PF00384">
    <property type="entry name" value="Molybdopterin"/>
    <property type="match status" value="1"/>
</dbReference>
<dbReference type="Pfam" id="PF01568">
    <property type="entry name" value="Molydop_binding"/>
    <property type="match status" value="1"/>
</dbReference>
<dbReference type="Pfam" id="PF10588">
    <property type="entry name" value="NADH-G_4Fe-4S_3"/>
    <property type="match status" value="1"/>
</dbReference>
<dbReference type="PIRSF" id="PIRSF036643">
    <property type="entry name" value="FDH_alpha"/>
    <property type="match status" value="1"/>
</dbReference>
<dbReference type="SMART" id="SM00926">
    <property type="entry name" value="Molybdop_Fe4S4"/>
    <property type="match status" value="1"/>
</dbReference>
<dbReference type="SMART" id="SM00929">
    <property type="entry name" value="NADH-G_4Fe-4S_3"/>
    <property type="match status" value="1"/>
</dbReference>
<dbReference type="SUPFAM" id="SSF54292">
    <property type="entry name" value="2Fe-2S ferredoxin-like"/>
    <property type="match status" value="1"/>
</dbReference>
<dbReference type="SUPFAM" id="SSF54862">
    <property type="entry name" value="4Fe-4S ferredoxins"/>
    <property type="match status" value="1"/>
</dbReference>
<dbReference type="SUPFAM" id="SSF50692">
    <property type="entry name" value="ADC-like"/>
    <property type="match status" value="1"/>
</dbReference>
<dbReference type="SUPFAM" id="SSF53706">
    <property type="entry name" value="Formate dehydrogenase/DMSO reductase, domains 1-3"/>
    <property type="match status" value="1"/>
</dbReference>
<dbReference type="PROSITE" id="PS51085">
    <property type="entry name" value="2FE2S_FER_2"/>
    <property type="match status" value="1"/>
</dbReference>
<dbReference type="PROSITE" id="PS00198">
    <property type="entry name" value="4FE4S_FER_1"/>
    <property type="match status" value="1"/>
</dbReference>
<dbReference type="PROSITE" id="PS51379">
    <property type="entry name" value="4FE4S_FER_2"/>
    <property type="match status" value="2"/>
</dbReference>
<dbReference type="PROSITE" id="PS51839">
    <property type="entry name" value="4FE4S_HC3"/>
    <property type="match status" value="1"/>
</dbReference>
<dbReference type="PROSITE" id="PS51669">
    <property type="entry name" value="4FE4S_MOW_BIS_MGD"/>
    <property type="match status" value="1"/>
</dbReference>
<name>FDHL_BACSU</name>
<sequence>MMDVKSISVRVDGTEIQARAGATILDILNENGIEYPQICHVPEVDPIQTCDTCIVEANGKLVRSCATVAENGMSIDLSGNRVKEAQTEAMDRLLENHLLYCTVCDNNNGNCTLHNTAEMMGIEHQKYPYTPKEDPSCAVDMSHPFYRYDPNQCIACGQCVEVCQNLQVNETLSIDWERERPRVIWDEGVPINESSCVSCGQCVTVCPCNALMEKSMLGQAGFMTGIKEDVMEPMIDLVKNVEPGYGSIFAISEVEAAMRETRTKKTKTVCTFCGVGCSFEVWTKGRDILKIQPVSDAPVNAISTCVKGKFGWDFVNSKERITKPLIRKNGAFVESSWEEALDLVASRLGSIKEQYGKGSVGFISSSKITNEENYVIQKLARQVFETNNVDNCSRYCQSPATDGLFRTVGMGGDAGTIKDIAKAGLVIIVGANPAEGHPVLATRVKRAHKLHGQKLIVADLRKNEMAERSDLFISPKQGTDQVWLMAVTKYMIDQGWHDQAFIDENVNYFEDYKETLKTYTLDYAERITGLSKENIIQIAEMIRDADGTCVLWGMGVTQNTGGSDTSAAISNLLLATGNYRRPGAGAYPLRGHNNVQGACDMGTLPGWLPGYQHITDDKARAKFEEAYGVEIDGKPGLDNIQMLHAIEEGKMKAMYLVGEDMALVDSNANHVHDILSSLDFFVVQDIFLSRTAQYADVVLPATPSLEKDGTFTNTERRVQRLYQALPTLGDAKPDWWIIQEVANRLGANWNYSHPSDIFSEMASLSPLFAKASYEVLEGWNSFLWGSFTGESTPLLYEDGFNFPDKKARFALSDWTEPAAFPEEYDLHINNGRMLEHFHEGNMTNKSKGIQAKVPNVFVEISPELAQERGVCDGSLVRLVSPFGAVKLNALITDRVRKNELYLPMNSTDKESAINFLTGPAADKRTNTPAYKQTKVRMEVLGGCETAPLPKTNPRNKKRHPQNGVEAERKWNRPGYVHLTD</sequence>
<accession>Q795Y4</accession>
<comment type="catalytic activity">
    <reaction>
        <text>formate + NAD(+) = CO2 + NADH</text>
        <dbReference type="Rhea" id="RHEA:15985"/>
        <dbReference type="ChEBI" id="CHEBI:15740"/>
        <dbReference type="ChEBI" id="CHEBI:16526"/>
        <dbReference type="ChEBI" id="CHEBI:57540"/>
        <dbReference type="ChEBI" id="CHEBI:57945"/>
        <dbReference type="EC" id="1.17.1.9"/>
    </reaction>
</comment>
<comment type="cofactor">
    <cofactor evidence="1">
        <name>[2Fe-2S] cluster</name>
        <dbReference type="ChEBI" id="CHEBI:190135"/>
    </cofactor>
    <text evidence="1">Binds 1 [2Fe-2S] cluster.</text>
</comment>
<comment type="cofactor">
    <cofactor evidence="1">
        <name>[4Fe-4S] cluster</name>
        <dbReference type="ChEBI" id="CHEBI:49883"/>
    </cofactor>
    <text evidence="1">Binds 4 [4Fe-4S] clusters.</text>
</comment>
<comment type="cofactor">
    <cofactor evidence="1">
        <name>Mo-bis(molybdopterin guanine dinucleotide)</name>
        <dbReference type="ChEBI" id="CHEBI:60539"/>
    </cofactor>
    <text evidence="1">Binds 1 molybdenum-bis(molybdopterin guanine dinucleotide) (Mo-bis-MGD) cofactor per subunit.</text>
</comment>
<comment type="similarity">
    <text evidence="7">In the C-terminal section; belongs to the prokaryotic molybdopterin-containing oxidoreductase family.</text>
</comment>
<feature type="chain" id="PRO_0000360689" description="Putative formate dehydrogenase YrhE">
    <location>
        <begin position="1"/>
        <end position="980"/>
    </location>
</feature>
<feature type="domain" description="2Fe-2S ferredoxin-type" evidence="2">
    <location>
        <begin position="5"/>
        <end position="81"/>
    </location>
</feature>
<feature type="domain" description="4Fe-4S His(Cys)3-ligated-type" evidence="5">
    <location>
        <begin position="81"/>
        <end position="121"/>
    </location>
</feature>
<feature type="domain" description="4Fe-4S ferredoxin-type 1" evidence="3">
    <location>
        <begin position="144"/>
        <end position="171"/>
    </location>
</feature>
<feature type="domain" description="4Fe-4S ferredoxin-type 2" evidence="3">
    <location>
        <begin position="187"/>
        <end position="216"/>
    </location>
</feature>
<feature type="domain" description="4Fe-4S Mo/W bis-MGD-type" evidence="4">
    <location>
        <begin position="263"/>
        <end position="319"/>
    </location>
</feature>
<feature type="region of interest" description="Formate dehydrogenase" evidence="1">
    <location>
        <begin position="258"/>
        <end position="980"/>
    </location>
</feature>
<feature type="region of interest" description="Disordered" evidence="6">
    <location>
        <begin position="944"/>
        <end position="980"/>
    </location>
</feature>
<feature type="binding site" evidence="1">
    <location>
        <position position="39"/>
    </location>
    <ligand>
        <name>[2Fe-2S] cluster</name>
        <dbReference type="ChEBI" id="CHEBI:190135"/>
    </ligand>
</feature>
<feature type="binding site" evidence="1">
    <location>
        <position position="50"/>
    </location>
    <ligand>
        <name>[2Fe-2S] cluster</name>
        <dbReference type="ChEBI" id="CHEBI:190135"/>
    </ligand>
</feature>
<feature type="binding site" evidence="1">
    <location>
        <position position="53"/>
    </location>
    <ligand>
        <name>[2Fe-2S] cluster</name>
        <dbReference type="ChEBI" id="CHEBI:190135"/>
    </ligand>
</feature>
<feature type="binding site" evidence="1">
    <location>
        <position position="65"/>
    </location>
    <ligand>
        <name>[2Fe-2S] cluster</name>
        <dbReference type="ChEBI" id="CHEBI:190135"/>
    </ligand>
</feature>
<feature type="binding site" evidence="5">
    <location>
        <position position="97"/>
    </location>
    <ligand>
        <name>[4Fe-4S] cluster</name>
        <dbReference type="ChEBI" id="CHEBI:49883"/>
        <label>1</label>
    </ligand>
</feature>
<feature type="binding site" evidence="5">
    <location>
        <position position="101"/>
    </location>
    <ligand>
        <name>[4Fe-4S] cluster</name>
        <dbReference type="ChEBI" id="CHEBI:49883"/>
        <label>1</label>
    </ligand>
</feature>
<feature type="binding site" evidence="5">
    <location>
        <position position="104"/>
    </location>
    <ligand>
        <name>[4Fe-4S] cluster</name>
        <dbReference type="ChEBI" id="CHEBI:49883"/>
        <label>1</label>
    </ligand>
</feature>
<feature type="binding site" evidence="5">
    <location>
        <position position="111"/>
    </location>
    <ligand>
        <name>[4Fe-4S] cluster</name>
        <dbReference type="ChEBI" id="CHEBI:49883"/>
        <label>1</label>
    </ligand>
</feature>
<feature type="binding site" evidence="1">
    <location>
        <position position="153"/>
    </location>
    <ligand>
        <name>[4Fe-4S] cluster</name>
        <dbReference type="ChEBI" id="CHEBI:49883"/>
        <label>2</label>
    </ligand>
</feature>
<feature type="binding site" evidence="1">
    <location>
        <position position="156"/>
    </location>
    <ligand>
        <name>[4Fe-4S] cluster</name>
        <dbReference type="ChEBI" id="CHEBI:49883"/>
        <label>2</label>
    </ligand>
</feature>
<feature type="binding site" evidence="1">
    <location>
        <position position="159"/>
    </location>
    <ligand>
        <name>[4Fe-4S] cluster</name>
        <dbReference type="ChEBI" id="CHEBI:49883"/>
        <label>2</label>
    </ligand>
</feature>
<feature type="binding site" evidence="1">
    <location>
        <position position="163"/>
    </location>
    <ligand>
        <name>[4Fe-4S] cluster</name>
        <dbReference type="ChEBI" id="CHEBI:49883"/>
        <label>3</label>
    </ligand>
</feature>
<feature type="binding site" evidence="1">
    <location>
        <position position="196"/>
    </location>
    <ligand>
        <name>[4Fe-4S] cluster</name>
        <dbReference type="ChEBI" id="CHEBI:49883"/>
        <label>3</label>
    </ligand>
</feature>
<feature type="binding site" evidence="1">
    <location>
        <position position="199"/>
    </location>
    <ligand>
        <name>[4Fe-4S] cluster</name>
        <dbReference type="ChEBI" id="CHEBI:49883"/>
        <label>3</label>
    </ligand>
</feature>
<feature type="binding site" evidence="1">
    <location>
        <position position="202"/>
    </location>
    <ligand>
        <name>[4Fe-4S] cluster</name>
        <dbReference type="ChEBI" id="CHEBI:49883"/>
        <label>3</label>
    </ligand>
</feature>
<feature type="binding site" evidence="1">
    <location>
        <position position="206"/>
    </location>
    <ligand>
        <name>[4Fe-4S] cluster</name>
        <dbReference type="ChEBI" id="CHEBI:49883"/>
        <label>2</label>
    </ligand>
</feature>
<feature type="binding site" evidence="1">
    <location>
        <position position="270"/>
    </location>
    <ligand>
        <name>[4Fe-4S] cluster</name>
        <dbReference type="ChEBI" id="CHEBI:49883"/>
        <label>4</label>
    </ligand>
</feature>
<feature type="binding site" evidence="1">
    <location>
        <position position="273"/>
    </location>
    <ligand>
        <name>[4Fe-4S] cluster</name>
        <dbReference type="ChEBI" id="CHEBI:49883"/>
        <label>4</label>
    </ligand>
</feature>
<feature type="binding site" evidence="1">
    <location>
        <position position="277"/>
    </location>
    <ligand>
        <name>[4Fe-4S] cluster</name>
        <dbReference type="ChEBI" id="CHEBI:49883"/>
        <label>4</label>
    </ligand>
</feature>
<feature type="binding site" evidence="1">
    <location>
        <position position="305"/>
    </location>
    <ligand>
        <name>[4Fe-4S] cluster</name>
        <dbReference type="ChEBI" id="CHEBI:49883"/>
        <label>4</label>
    </ligand>
</feature>
<reference key="1">
    <citation type="journal article" date="1997" name="Nature">
        <title>The complete genome sequence of the Gram-positive bacterium Bacillus subtilis.</title>
        <authorList>
            <person name="Kunst F."/>
            <person name="Ogasawara N."/>
            <person name="Moszer I."/>
            <person name="Albertini A.M."/>
            <person name="Alloni G."/>
            <person name="Azevedo V."/>
            <person name="Bertero M.G."/>
            <person name="Bessieres P."/>
            <person name="Bolotin A."/>
            <person name="Borchert S."/>
            <person name="Borriss R."/>
            <person name="Boursier L."/>
            <person name="Brans A."/>
            <person name="Braun M."/>
            <person name="Brignell S.C."/>
            <person name="Bron S."/>
            <person name="Brouillet S."/>
            <person name="Bruschi C.V."/>
            <person name="Caldwell B."/>
            <person name="Capuano V."/>
            <person name="Carter N.M."/>
            <person name="Choi S.-K."/>
            <person name="Codani J.-J."/>
            <person name="Connerton I.F."/>
            <person name="Cummings N.J."/>
            <person name="Daniel R.A."/>
            <person name="Denizot F."/>
            <person name="Devine K.M."/>
            <person name="Duesterhoeft A."/>
            <person name="Ehrlich S.D."/>
            <person name="Emmerson P.T."/>
            <person name="Entian K.-D."/>
            <person name="Errington J."/>
            <person name="Fabret C."/>
            <person name="Ferrari E."/>
            <person name="Foulger D."/>
            <person name="Fritz C."/>
            <person name="Fujita M."/>
            <person name="Fujita Y."/>
            <person name="Fuma S."/>
            <person name="Galizzi A."/>
            <person name="Galleron N."/>
            <person name="Ghim S.-Y."/>
            <person name="Glaser P."/>
            <person name="Goffeau A."/>
            <person name="Golightly E.J."/>
            <person name="Grandi G."/>
            <person name="Guiseppi G."/>
            <person name="Guy B.J."/>
            <person name="Haga K."/>
            <person name="Haiech J."/>
            <person name="Harwood C.R."/>
            <person name="Henaut A."/>
            <person name="Hilbert H."/>
            <person name="Holsappel S."/>
            <person name="Hosono S."/>
            <person name="Hullo M.-F."/>
            <person name="Itaya M."/>
            <person name="Jones L.-M."/>
            <person name="Joris B."/>
            <person name="Karamata D."/>
            <person name="Kasahara Y."/>
            <person name="Klaerr-Blanchard M."/>
            <person name="Klein C."/>
            <person name="Kobayashi Y."/>
            <person name="Koetter P."/>
            <person name="Koningstein G."/>
            <person name="Krogh S."/>
            <person name="Kumano M."/>
            <person name="Kurita K."/>
            <person name="Lapidus A."/>
            <person name="Lardinois S."/>
            <person name="Lauber J."/>
            <person name="Lazarevic V."/>
            <person name="Lee S.-M."/>
            <person name="Levine A."/>
            <person name="Liu H."/>
            <person name="Masuda S."/>
            <person name="Mauel C."/>
            <person name="Medigue C."/>
            <person name="Medina N."/>
            <person name="Mellado R.P."/>
            <person name="Mizuno M."/>
            <person name="Moestl D."/>
            <person name="Nakai S."/>
            <person name="Noback M."/>
            <person name="Noone D."/>
            <person name="O'Reilly M."/>
            <person name="Ogawa K."/>
            <person name="Ogiwara A."/>
            <person name="Oudega B."/>
            <person name="Park S.-H."/>
            <person name="Parro V."/>
            <person name="Pohl T.M."/>
            <person name="Portetelle D."/>
            <person name="Porwollik S."/>
            <person name="Prescott A.M."/>
            <person name="Presecan E."/>
            <person name="Pujic P."/>
            <person name="Purnelle B."/>
            <person name="Rapoport G."/>
            <person name="Rey M."/>
            <person name="Reynolds S."/>
            <person name="Rieger M."/>
            <person name="Rivolta C."/>
            <person name="Rocha E."/>
            <person name="Roche B."/>
            <person name="Rose M."/>
            <person name="Sadaie Y."/>
            <person name="Sato T."/>
            <person name="Scanlan E."/>
            <person name="Schleich S."/>
            <person name="Schroeter R."/>
            <person name="Scoffone F."/>
            <person name="Sekiguchi J."/>
            <person name="Sekowska A."/>
            <person name="Seror S.J."/>
            <person name="Serror P."/>
            <person name="Shin B.-S."/>
            <person name="Soldo B."/>
            <person name="Sorokin A."/>
            <person name="Tacconi E."/>
            <person name="Takagi T."/>
            <person name="Takahashi H."/>
            <person name="Takemaru K."/>
            <person name="Takeuchi M."/>
            <person name="Tamakoshi A."/>
            <person name="Tanaka T."/>
            <person name="Terpstra P."/>
            <person name="Tognoni A."/>
            <person name="Tosato V."/>
            <person name="Uchiyama S."/>
            <person name="Vandenbol M."/>
            <person name="Vannier F."/>
            <person name="Vassarotti A."/>
            <person name="Viari A."/>
            <person name="Wambutt R."/>
            <person name="Wedler E."/>
            <person name="Wedler H."/>
            <person name="Weitzenegger T."/>
            <person name="Winters P."/>
            <person name="Wipat A."/>
            <person name="Yamamoto H."/>
            <person name="Yamane K."/>
            <person name="Yasumoto K."/>
            <person name="Yata K."/>
            <person name="Yoshida K."/>
            <person name="Yoshikawa H.-F."/>
            <person name="Zumstein E."/>
            <person name="Yoshikawa H."/>
            <person name="Danchin A."/>
        </authorList>
    </citation>
    <scope>NUCLEOTIDE SEQUENCE [LARGE SCALE GENOMIC DNA]</scope>
    <source>
        <strain>168</strain>
    </source>
</reference>
<protein>
    <recommendedName>
        <fullName>Putative formate dehydrogenase YrhE</fullName>
        <ecNumber>1.17.1.9</ecNumber>
    </recommendedName>
</protein>